<feature type="chain" id="PRO_0000169495" description="Alternative ribosome-rescue factor A">
    <location>
        <begin position="1"/>
        <end position="69"/>
    </location>
</feature>
<organism>
    <name type="scientific">Haemophilus influenzae (strain ATCC 51907 / DSM 11121 / KW20 / Rd)</name>
    <dbReference type="NCBI Taxonomy" id="71421"/>
    <lineage>
        <taxon>Bacteria</taxon>
        <taxon>Pseudomonadati</taxon>
        <taxon>Pseudomonadota</taxon>
        <taxon>Gammaproteobacteria</taxon>
        <taxon>Pasteurellales</taxon>
        <taxon>Pasteurellaceae</taxon>
        <taxon>Haemophilus</taxon>
    </lineage>
</organism>
<proteinExistence type="inferred from homology"/>
<protein>
    <recommendedName>
        <fullName>Alternative ribosome-rescue factor A</fullName>
    </recommendedName>
</protein>
<keyword id="KW-1185">Reference proteome</keyword>
<keyword id="KW-0694">RNA-binding</keyword>
<keyword id="KW-0699">rRNA-binding</keyword>
<keyword id="KW-0810">Translation regulation</keyword>
<accession>P44588</accession>
<sequence>MRKKQKSAVENETVYLHTRGVIKDNAVMALLGDKLFRQRVEKKRKGKGSYQRKAKHPGKIFEKPDYKFF</sequence>
<evidence type="ECO:0000250" key="1">
    <source>
        <dbReference type="UniProtKB" id="P36675"/>
    </source>
</evidence>
<evidence type="ECO:0000305" key="2"/>
<gene>
    <name type="primary">arfA</name>
    <name type="ordered locus">HI_0235</name>
</gene>
<dbReference type="EMBL" id="L42023">
    <property type="protein sequence ID" value="AAC21905.1"/>
    <property type="molecule type" value="Genomic_DNA"/>
</dbReference>
<dbReference type="PIR" id="I64145">
    <property type="entry name" value="I64145"/>
</dbReference>
<dbReference type="RefSeq" id="NP_438406.1">
    <property type="nucleotide sequence ID" value="NC_000907.1"/>
</dbReference>
<dbReference type="SMR" id="P44588"/>
<dbReference type="STRING" id="71421.HI_0235"/>
<dbReference type="DNASU" id="951152"/>
<dbReference type="EnsemblBacteria" id="AAC21905">
    <property type="protein sequence ID" value="AAC21905"/>
    <property type="gene ID" value="HI_0235"/>
</dbReference>
<dbReference type="KEGG" id="hin:HI_0235"/>
<dbReference type="PATRIC" id="fig|71421.8.peg.250"/>
<dbReference type="eggNOG" id="COG3036">
    <property type="taxonomic scope" value="Bacteria"/>
</dbReference>
<dbReference type="HOGENOM" id="CLU_170842_2_1_6"/>
<dbReference type="OrthoDB" id="8603552at2"/>
<dbReference type="PhylomeDB" id="P44588"/>
<dbReference type="BioCyc" id="HINF71421:G1GJ1-251-MONOMER"/>
<dbReference type="Proteomes" id="UP000000579">
    <property type="component" value="Chromosome"/>
</dbReference>
<dbReference type="GO" id="GO:0019843">
    <property type="term" value="F:rRNA binding"/>
    <property type="evidence" value="ECO:0007669"/>
    <property type="project" value="UniProtKB-KW"/>
</dbReference>
<dbReference type="GO" id="GO:0006417">
    <property type="term" value="P:regulation of translation"/>
    <property type="evidence" value="ECO:0007669"/>
    <property type="project" value="UniProtKB-KW"/>
</dbReference>
<dbReference type="GO" id="GO:0072344">
    <property type="term" value="P:rescue of stalled ribosome"/>
    <property type="evidence" value="ECO:0007669"/>
    <property type="project" value="InterPro"/>
</dbReference>
<dbReference type="InterPro" id="IPR005589">
    <property type="entry name" value="ArfA"/>
</dbReference>
<dbReference type="Pfam" id="PF03889">
    <property type="entry name" value="ArfA"/>
    <property type="match status" value="1"/>
</dbReference>
<name>ARFA_HAEIN</name>
<comment type="function">
    <text evidence="1">Rescues ribosomes stalled at the 3' end of non-stop mRNAs. Recruits release factor 2 (RF2) to the stalled ribosome, helping position it correctly in the ribosomal A site so its GGQ motif can hydrolyze the peptidyl-tRNA bond (By similarity).</text>
</comment>
<comment type="subunit">
    <text evidence="1">Interacts with the 70S ribosome and release factor 2.</text>
</comment>
<comment type="similarity">
    <text evidence="2">Belongs to the alternative ribosome-rescue factor A family.</text>
</comment>
<reference key="1">
    <citation type="journal article" date="1995" name="Science">
        <title>Whole-genome random sequencing and assembly of Haemophilus influenzae Rd.</title>
        <authorList>
            <person name="Fleischmann R.D."/>
            <person name="Adams M.D."/>
            <person name="White O."/>
            <person name="Clayton R.A."/>
            <person name="Kirkness E.F."/>
            <person name="Kerlavage A.R."/>
            <person name="Bult C.J."/>
            <person name="Tomb J.-F."/>
            <person name="Dougherty B.A."/>
            <person name="Merrick J.M."/>
            <person name="McKenney K."/>
            <person name="Sutton G.G."/>
            <person name="FitzHugh W."/>
            <person name="Fields C.A."/>
            <person name="Gocayne J.D."/>
            <person name="Scott J.D."/>
            <person name="Shirley R."/>
            <person name="Liu L.-I."/>
            <person name="Glodek A."/>
            <person name="Kelley J.M."/>
            <person name="Weidman J.F."/>
            <person name="Phillips C.A."/>
            <person name="Spriggs T."/>
            <person name="Hedblom E."/>
            <person name="Cotton M.D."/>
            <person name="Utterback T.R."/>
            <person name="Hanna M.C."/>
            <person name="Nguyen D.T."/>
            <person name="Saudek D.M."/>
            <person name="Brandon R.C."/>
            <person name="Fine L.D."/>
            <person name="Fritchman J.L."/>
            <person name="Fuhrmann J.L."/>
            <person name="Geoghagen N.S.M."/>
            <person name="Gnehm C.L."/>
            <person name="McDonald L.A."/>
            <person name="Small K.V."/>
            <person name="Fraser C.M."/>
            <person name="Smith H.O."/>
            <person name="Venter J.C."/>
        </authorList>
    </citation>
    <scope>NUCLEOTIDE SEQUENCE [LARGE SCALE GENOMIC DNA]</scope>
    <source>
        <strain>ATCC 51907 / DSM 11121 / KW20 / Rd</strain>
    </source>
</reference>